<comment type="function">
    <text evidence="1">F(1)F(0) ATP synthase produces ATP from ADP in the presence of a proton or sodium gradient. F-type ATPases consist of two structural domains, F(1) containing the extramembraneous catalytic core and F(0) containing the membrane proton channel, linked together by a central stalk and a peripheral stalk. During catalysis, ATP synthesis in the catalytic domain of F(1) is coupled via a rotary mechanism of the central stalk subunits to proton translocation.</text>
</comment>
<comment type="function">
    <text evidence="1">This protein is part of the stalk that links CF(0) to CF(1). It either transmits conformational changes from CF(0) to CF(1) or is implicated in proton conduction.</text>
</comment>
<comment type="subunit">
    <text evidence="1">F-type ATPases have 2 components, F(1) - the catalytic core - and F(0) - the membrane proton channel. F(1) has five subunits: alpha(3), beta(3), gamma(1), delta(1), epsilon(1). F(0) has three main subunits: a(1), b(2) and c(10-14). The alpha and beta chains form an alternating ring which encloses part of the gamma chain. F(1) is attached to F(0) by a central stalk formed by the gamma and epsilon chains, while a peripheral stalk is formed by the delta and b chains.</text>
</comment>
<comment type="subcellular location">
    <subcellularLocation>
        <location evidence="1">Cell membrane</location>
        <topology evidence="1">Peripheral membrane protein</topology>
    </subcellularLocation>
</comment>
<comment type="similarity">
    <text evidence="1">Belongs to the ATPase delta chain family.</text>
</comment>
<reference key="1">
    <citation type="submission" date="2007-10" db="EMBL/GenBank/DDBJ databases">
        <title>Complete sequence of Salinispora arenicola CNS-205.</title>
        <authorList>
            <consortium name="US DOE Joint Genome Institute"/>
            <person name="Copeland A."/>
            <person name="Lucas S."/>
            <person name="Lapidus A."/>
            <person name="Barry K."/>
            <person name="Glavina del Rio T."/>
            <person name="Dalin E."/>
            <person name="Tice H."/>
            <person name="Pitluck S."/>
            <person name="Foster B."/>
            <person name="Schmutz J."/>
            <person name="Larimer F."/>
            <person name="Land M."/>
            <person name="Hauser L."/>
            <person name="Kyrpides N."/>
            <person name="Ivanova N."/>
            <person name="Jensen P.R."/>
            <person name="Moore B.S."/>
            <person name="Penn K."/>
            <person name="Jenkins C."/>
            <person name="Udwary D."/>
            <person name="Xiang L."/>
            <person name="Gontang E."/>
            <person name="Richardson P."/>
        </authorList>
    </citation>
    <scope>NUCLEOTIDE SEQUENCE [LARGE SCALE GENOMIC DNA]</scope>
    <source>
        <strain>CNS-205</strain>
    </source>
</reference>
<feature type="chain" id="PRO_0000371110" description="ATP synthase subunit delta">
    <location>
        <begin position="1"/>
        <end position="274"/>
    </location>
</feature>
<name>ATPD_SALAI</name>
<keyword id="KW-0066">ATP synthesis</keyword>
<keyword id="KW-1003">Cell membrane</keyword>
<keyword id="KW-0139">CF(1)</keyword>
<keyword id="KW-0375">Hydrogen ion transport</keyword>
<keyword id="KW-0406">Ion transport</keyword>
<keyword id="KW-0472">Membrane</keyword>
<keyword id="KW-0813">Transport</keyword>
<dbReference type="EMBL" id="CP000850">
    <property type="protein sequence ID" value="ABV99805.1"/>
    <property type="molecule type" value="Genomic_DNA"/>
</dbReference>
<dbReference type="SMR" id="A8M2J6"/>
<dbReference type="STRING" id="391037.Sare_4015"/>
<dbReference type="KEGG" id="saq:Sare_4015"/>
<dbReference type="PATRIC" id="fig|391037.6.peg.4052"/>
<dbReference type="eggNOG" id="COG0712">
    <property type="taxonomic scope" value="Bacteria"/>
</dbReference>
<dbReference type="HOGENOM" id="CLU_088880_0_0_11"/>
<dbReference type="OrthoDB" id="5242917at2"/>
<dbReference type="GO" id="GO:0005886">
    <property type="term" value="C:plasma membrane"/>
    <property type="evidence" value="ECO:0007669"/>
    <property type="project" value="UniProtKB-SubCell"/>
</dbReference>
<dbReference type="GO" id="GO:0045259">
    <property type="term" value="C:proton-transporting ATP synthase complex"/>
    <property type="evidence" value="ECO:0007669"/>
    <property type="project" value="UniProtKB-KW"/>
</dbReference>
<dbReference type="GO" id="GO:0046933">
    <property type="term" value="F:proton-transporting ATP synthase activity, rotational mechanism"/>
    <property type="evidence" value="ECO:0007669"/>
    <property type="project" value="UniProtKB-UniRule"/>
</dbReference>
<dbReference type="Gene3D" id="1.10.520.20">
    <property type="entry name" value="N-terminal domain of the delta subunit of the F1F0-ATP synthase"/>
    <property type="match status" value="1"/>
</dbReference>
<dbReference type="HAMAP" id="MF_01416">
    <property type="entry name" value="ATP_synth_delta_bact"/>
    <property type="match status" value="1"/>
</dbReference>
<dbReference type="InterPro" id="IPR026015">
    <property type="entry name" value="ATP_synth_OSCP/delta_N_sf"/>
</dbReference>
<dbReference type="InterPro" id="IPR000711">
    <property type="entry name" value="ATPase_OSCP/dsu"/>
</dbReference>
<dbReference type="NCBIfam" id="NF009967">
    <property type="entry name" value="PRK13430.1"/>
    <property type="match status" value="1"/>
</dbReference>
<dbReference type="PANTHER" id="PTHR11910">
    <property type="entry name" value="ATP SYNTHASE DELTA CHAIN"/>
    <property type="match status" value="1"/>
</dbReference>
<dbReference type="Pfam" id="PF00213">
    <property type="entry name" value="OSCP"/>
    <property type="match status" value="1"/>
</dbReference>
<dbReference type="PRINTS" id="PR00125">
    <property type="entry name" value="ATPASEDELTA"/>
</dbReference>
<sequence>MQAATSRESYRIAGDRLDAYVRGAEPSAVAATADELLSVADLIRREPRLRRALADPARSGADRAALLTGILSGKVGADALDLSTTLVAGRWSAPSELLDGAERLGVAALLAAADKAGDLGEVEDELFRFGQVVAGQSALSNALSDPAAPVEQRATLAGELLTGKARPVTVRLVEVALGGFGGRSFVGALTRLVELAADRRDRQVAYVTVAAPLGEEEERRLGASLSAIYGREVSVKQSVDPEVLGGVSVRVGSDLYDGTVLRRLNETRNALAKR</sequence>
<accession>A8M2J6</accession>
<protein>
    <recommendedName>
        <fullName evidence="1">ATP synthase subunit delta</fullName>
    </recommendedName>
    <alternativeName>
        <fullName evidence="1">ATP synthase F(1) sector subunit delta</fullName>
    </alternativeName>
    <alternativeName>
        <fullName evidence="1">F-type ATPase subunit delta</fullName>
        <shortName evidence="1">F-ATPase subunit delta</shortName>
    </alternativeName>
</protein>
<evidence type="ECO:0000255" key="1">
    <source>
        <dbReference type="HAMAP-Rule" id="MF_01416"/>
    </source>
</evidence>
<organism>
    <name type="scientific">Salinispora arenicola (strain CNS-205)</name>
    <dbReference type="NCBI Taxonomy" id="391037"/>
    <lineage>
        <taxon>Bacteria</taxon>
        <taxon>Bacillati</taxon>
        <taxon>Actinomycetota</taxon>
        <taxon>Actinomycetes</taxon>
        <taxon>Micromonosporales</taxon>
        <taxon>Micromonosporaceae</taxon>
        <taxon>Salinispora</taxon>
    </lineage>
</organism>
<gene>
    <name evidence="1" type="primary">atpH</name>
    <name type="ordered locus">Sare_4015</name>
</gene>
<proteinExistence type="inferred from homology"/>